<sequence length="692" mass="76327">MTREFSLENTRNIGIMAHIDAGKTTATERILYYTGRIHKIGETHEGASQMDWMEQEQERGITITSAATTAQWKGHRVNIIDTPGHVDFTVEVERSLRVLDGAVAVLDAQSGVEPQTETVWRQATTYGVPRIVFVNKMDKIGADFLYSVGTIHDRLQANAHPIQLPIGAEDEFNGIIDLVEECAYMYGNDLGTDIERVEIPEEHKELAEEYRGKLIEAVAELDEEMMMKYLEGEEITVEELKAGIRKATTSVEFFPVICGSAFKNKGVQILLDAVIDYLPSPLDVPAIKGTLPDTDEEVERKSSDEEPFAALAFKIMTDPYVGKLTFFRVYSGVLNSGSYVKNSTKGKRERVGRILQMHANSREEISTVYAGDIAAAVGLKDTTTGDTLCDEKSLVILESMEFPEPVISVAIEPKSKADQDKMGTALSKLSEEDPTFRAHTDQETGQTIIAGMGELHLDIIVDRMRREFKVEANVGAPQVAYRETFRAAAKVEGKFARQSGGRGQFGHVWIEFAPNEEGKGFEFENKIVGGVVPREYIPAVGAGLEDSLKNGVLAGYPLVDIKAALVDGSYHDVDSSEMAFKIAASMALKAAVSKCNPVILEPMMKVEVVIPEEYMGDIMGDVTSRRGRVEGMEARGNAQVVRAMVPLSEMFGYATALRSNTQGRGTFSMTFDHYEEVPKSVSEEIIKKNKGE</sequence>
<keyword id="KW-0963">Cytoplasm</keyword>
<keyword id="KW-0251">Elongation factor</keyword>
<keyword id="KW-0342">GTP-binding</keyword>
<keyword id="KW-0547">Nucleotide-binding</keyword>
<keyword id="KW-0648">Protein biosynthesis</keyword>
<accession>B7IT16</accession>
<comment type="function">
    <text evidence="1">Catalyzes the GTP-dependent ribosomal translocation step during translation elongation. During this step, the ribosome changes from the pre-translocational (PRE) to the post-translocational (POST) state as the newly formed A-site-bound peptidyl-tRNA and P-site-bound deacylated tRNA move to the P and E sites, respectively. Catalyzes the coordinated movement of the two tRNA molecules, the mRNA and conformational changes in the ribosome.</text>
</comment>
<comment type="subcellular location">
    <subcellularLocation>
        <location evidence="1">Cytoplasm</location>
    </subcellularLocation>
</comment>
<comment type="similarity">
    <text evidence="1">Belongs to the TRAFAC class translation factor GTPase superfamily. Classic translation factor GTPase family. EF-G/EF-2 subfamily.</text>
</comment>
<organism>
    <name type="scientific">Bacillus cereus (strain G9842)</name>
    <dbReference type="NCBI Taxonomy" id="405531"/>
    <lineage>
        <taxon>Bacteria</taxon>
        <taxon>Bacillati</taxon>
        <taxon>Bacillota</taxon>
        <taxon>Bacilli</taxon>
        <taxon>Bacillales</taxon>
        <taxon>Bacillaceae</taxon>
        <taxon>Bacillus</taxon>
        <taxon>Bacillus cereus group</taxon>
    </lineage>
</organism>
<dbReference type="EMBL" id="CP001186">
    <property type="protein sequence ID" value="ACK93224.1"/>
    <property type="molecule type" value="Genomic_DNA"/>
</dbReference>
<dbReference type="RefSeq" id="WP_000196384.1">
    <property type="nucleotide sequence ID" value="NC_011772.1"/>
</dbReference>
<dbReference type="SMR" id="B7IT16"/>
<dbReference type="KEGG" id="bcg:BCG9842_B5198"/>
<dbReference type="HOGENOM" id="CLU_002794_4_1_9"/>
<dbReference type="Proteomes" id="UP000006744">
    <property type="component" value="Chromosome"/>
</dbReference>
<dbReference type="GO" id="GO:0005737">
    <property type="term" value="C:cytoplasm"/>
    <property type="evidence" value="ECO:0007669"/>
    <property type="project" value="UniProtKB-SubCell"/>
</dbReference>
<dbReference type="GO" id="GO:0005525">
    <property type="term" value="F:GTP binding"/>
    <property type="evidence" value="ECO:0007669"/>
    <property type="project" value="UniProtKB-UniRule"/>
</dbReference>
<dbReference type="GO" id="GO:0003924">
    <property type="term" value="F:GTPase activity"/>
    <property type="evidence" value="ECO:0007669"/>
    <property type="project" value="InterPro"/>
</dbReference>
<dbReference type="GO" id="GO:0003746">
    <property type="term" value="F:translation elongation factor activity"/>
    <property type="evidence" value="ECO:0007669"/>
    <property type="project" value="UniProtKB-UniRule"/>
</dbReference>
<dbReference type="GO" id="GO:0032790">
    <property type="term" value="P:ribosome disassembly"/>
    <property type="evidence" value="ECO:0007669"/>
    <property type="project" value="TreeGrafter"/>
</dbReference>
<dbReference type="CDD" id="cd01886">
    <property type="entry name" value="EF-G"/>
    <property type="match status" value="1"/>
</dbReference>
<dbReference type="CDD" id="cd16262">
    <property type="entry name" value="EFG_III"/>
    <property type="match status" value="1"/>
</dbReference>
<dbReference type="CDD" id="cd01434">
    <property type="entry name" value="EFG_mtEFG1_IV"/>
    <property type="match status" value="1"/>
</dbReference>
<dbReference type="CDD" id="cd03713">
    <property type="entry name" value="EFG_mtEFG_C"/>
    <property type="match status" value="1"/>
</dbReference>
<dbReference type="CDD" id="cd04088">
    <property type="entry name" value="EFG_mtEFG_II"/>
    <property type="match status" value="1"/>
</dbReference>
<dbReference type="FunFam" id="2.40.30.10:FF:000006">
    <property type="entry name" value="Elongation factor G"/>
    <property type="match status" value="1"/>
</dbReference>
<dbReference type="FunFam" id="3.30.230.10:FF:000003">
    <property type="entry name" value="Elongation factor G"/>
    <property type="match status" value="1"/>
</dbReference>
<dbReference type="FunFam" id="3.30.70.240:FF:000001">
    <property type="entry name" value="Elongation factor G"/>
    <property type="match status" value="1"/>
</dbReference>
<dbReference type="FunFam" id="3.30.70.870:FF:000001">
    <property type="entry name" value="Elongation factor G"/>
    <property type="match status" value="1"/>
</dbReference>
<dbReference type="FunFam" id="3.40.50.300:FF:000029">
    <property type="entry name" value="Elongation factor G"/>
    <property type="match status" value="1"/>
</dbReference>
<dbReference type="Gene3D" id="3.30.230.10">
    <property type="match status" value="1"/>
</dbReference>
<dbReference type="Gene3D" id="3.30.70.240">
    <property type="match status" value="1"/>
</dbReference>
<dbReference type="Gene3D" id="3.30.70.870">
    <property type="entry name" value="Elongation Factor G (Translational Gtpase), domain 3"/>
    <property type="match status" value="1"/>
</dbReference>
<dbReference type="Gene3D" id="3.40.50.300">
    <property type="entry name" value="P-loop containing nucleotide triphosphate hydrolases"/>
    <property type="match status" value="1"/>
</dbReference>
<dbReference type="Gene3D" id="2.40.30.10">
    <property type="entry name" value="Translation factors"/>
    <property type="match status" value="1"/>
</dbReference>
<dbReference type="HAMAP" id="MF_00054_B">
    <property type="entry name" value="EF_G_EF_2_B"/>
    <property type="match status" value="1"/>
</dbReference>
<dbReference type="InterPro" id="IPR041095">
    <property type="entry name" value="EFG_II"/>
</dbReference>
<dbReference type="InterPro" id="IPR009022">
    <property type="entry name" value="EFG_III"/>
</dbReference>
<dbReference type="InterPro" id="IPR035647">
    <property type="entry name" value="EFG_III/V"/>
</dbReference>
<dbReference type="InterPro" id="IPR047872">
    <property type="entry name" value="EFG_IV"/>
</dbReference>
<dbReference type="InterPro" id="IPR035649">
    <property type="entry name" value="EFG_V"/>
</dbReference>
<dbReference type="InterPro" id="IPR000640">
    <property type="entry name" value="EFG_V-like"/>
</dbReference>
<dbReference type="InterPro" id="IPR004161">
    <property type="entry name" value="EFTu-like_2"/>
</dbReference>
<dbReference type="InterPro" id="IPR031157">
    <property type="entry name" value="G_TR_CS"/>
</dbReference>
<dbReference type="InterPro" id="IPR027417">
    <property type="entry name" value="P-loop_NTPase"/>
</dbReference>
<dbReference type="InterPro" id="IPR020568">
    <property type="entry name" value="Ribosomal_Su5_D2-typ_SF"/>
</dbReference>
<dbReference type="InterPro" id="IPR014721">
    <property type="entry name" value="Ribsml_uS5_D2-typ_fold_subgr"/>
</dbReference>
<dbReference type="InterPro" id="IPR005225">
    <property type="entry name" value="Small_GTP-bd"/>
</dbReference>
<dbReference type="InterPro" id="IPR000795">
    <property type="entry name" value="T_Tr_GTP-bd_dom"/>
</dbReference>
<dbReference type="InterPro" id="IPR009000">
    <property type="entry name" value="Transl_B-barrel_sf"/>
</dbReference>
<dbReference type="InterPro" id="IPR004540">
    <property type="entry name" value="Transl_elong_EFG/EF2"/>
</dbReference>
<dbReference type="InterPro" id="IPR005517">
    <property type="entry name" value="Transl_elong_EFG/EF2_IV"/>
</dbReference>
<dbReference type="NCBIfam" id="TIGR00484">
    <property type="entry name" value="EF-G"/>
    <property type="match status" value="1"/>
</dbReference>
<dbReference type="NCBIfam" id="NF009379">
    <property type="entry name" value="PRK12740.1-3"/>
    <property type="match status" value="1"/>
</dbReference>
<dbReference type="NCBIfam" id="NF009381">
    <property type="entry name" value="PRK12740.1-5"/>
    <property type="match status" value="1"/>
</dbReference>
<dbReference type="NCBIfam" id="NF009891">
    <property type="entry name" value="PRK13351.1-1"/>
    <property type="match status" value="1"/>
</dbReference>
<dbReference type="NCBIfam" id="TIGR00231">
    <property type="entry name" value="small_GTP"/>
    <property type="match status" value="1"/>
</dbReference>
<dbReference type="PANTHER" id="PTHR43261:SF1">
    <property type="entry name" value="RIBOSOME-RELEASING FACTOR 2, MITOCHONDRIAL"/>
    <property type="match status" value="1"/>
</dbReference>
<dbReference type="PANTHER" id="PTHR43261">
    <property type="entry name" value="TRANSLATION ELONGATION FACTOR G-RELATED"/>
    <property type="match status" value="1"/>
</dbReference>
<dbReference type="Pfam" id="PF00679">
    <property type="entry name" value="EFG_C"/>
    <property type="match status" value="1"/>
</dbReference>
<dbReference type="Pfam" id="PF14492">
    <property type="entry name" value="EFG_III"/>
    <property type="match status" value="1"/>
</dbReference>
<dbReference type="Pfam" id="PF03764">
    <property type="entry name" value="EFG_IV"/>
    <property type="match status" value="1"/>
</dbReference>
<dbReference type="Pfam" id="PF00009">
    <property type="entry name" value="GTP_EFTU"/>
    <property type="match status" value="1"/>
</dbReference>
<dbReference type="Pfam" id="PF03144">
    <property type="entry name" value="GTP_EFTU_D2"/>
    <property type="match status" value="1"/>
</dbReference>
<dbReference type="PRINTS" id="PR00315">
    <property type="entry name" value="ELONGATNFCT"/>
</dbReference>
<dbReference type="SMART" id="SM00838">
    <property type="entry name" value="EFG_C"/>
    <property type="match status" value="1"/>
</dbReference>
<dbReference type="SMART" id="SM00889">
    <property type="entry name" value="EFG_IV"/>
    <property type="match status" value="1"/>
</dbReference>
<dbReference type="SUPFAM" id="SSF54980">
    <property type="entry name" value="EF-G C-terminal domain-like"/>
    <property type="match status" value="2"/>
</dbReference>
<dbReference type="SUPFAM" id="SSF52540">
    <property type="entry name" value="P-loop containing nucleoside triphosphate hydrolases"/>
    <property type="match status" value="1"/>
</dbReference>
<dbReference type="SUPFAM" id="SSF54211">
    <property type="entry name" value="Ribosomal protein S5 domain 2-like"/>
    <property type="match status" value="1"/>
</dbReference>
<dbReference type="SUPFAM" id="SSF50447">
    <property type="entry name" value="Translation proteins"/>
    <property type="match status" value="1"/>
</dbReference>
<dbReference type="PROSITE" id="PS00301">
    <property type="entry name" value="G_TR_1"/>
    <property type="match status" value="1"/>
</dbReference>
<dbReference type="PROSITE" id="PS51722">
    <property type="entry name" value="G_TR_2"/>
    <property type="match status" value="1"/>
</dbReference>
<gene>
    <name evidence="1" type="primary">fusA</name>
    <name type="ordered locus">BCG9842_B5198</name>
</gene>
<proteinExistence type="inferred from homology"/>
<protein>
    <recommendedName>
        <fullName evidence="1">Elongation factor G</fullName>
        <shortName evidence="1">EF-G</shortName>
    </recommendedName>
</protein>
<reference key="1">
    <citation type="submission" date="2008-10" db="EMBL/GenBank/DDBJ databases">
        <title>Genome sequence of Bacillus cereus G9842.</title>
        <authorList>
            <person name="Dodson R.J."/>
            <person name="Durkin A.S."/>
            <person name="Rosovitz M.J."/>
            <person name="Rasko D.A."/>
            <person name="Hoffmaster A."/>
            <person name="Ravel J."/>
            <person name="Sutton G."/>
        </authorList>
    </citation>
    <scope>NUCLEOTIDE SEQUENCE [LARGE SCALE GENOMIC DNA]</scope>
    <source>
        <strain>G9842</strain>
    </source>
</reference>
<feature type="chain" id="PRO_1000201438" description="Elongation factor G">
    <location>
        <begin position="1"/>
        <end position="692"/>
    </location>
</feature>
<feature type="domain" description="tr-type G">
    <location>
        <begin position="8"/>
        <end position="282"/>
    </location>
</feature>
<feature type="binding site" evidence="1">
    <location>
        <begin position="17"/>
        <end position="24"/>
    </location>
    <ligand>
        <name>GTP</name>
        <dbReference type="ChEBI" id="CHEBI:37565"/>
    </ligand>
</feature>
<feature type="binding site" evidence="1">
    <location>
        <begin position="81"/>
        <end position="85"/>
    </location>
    <ligand>
        <name>GTP</name>
        <dbReference type="ChEBI" id="CHEBI:37565"/>
    </ligand>
</feature>
<feature type="binding site" evidence="1">
    <location>
        <begin position="135"/>
        <end position="138"/>
    </location>
    <ligand>
        <name>GTP</name>
        <dbReference type="ChEBI" id="CHEBI:37565"/>
    </ligand>
</feature>
<name>EFG_BACC2</name>
<evidence type="ECO:0000255" key="1">
    <source>
        <dbReference type="HAMAP-Rule" id="MF_00054"/>
    </source>
</evidence>